<gene>
    <name evidence="1" type="primary">miaB</name>
    <name type="ordered locus">WD_0421</name>
</gene>
<sequence>MKGLYIKTYGCQMNVYDSVLMENVIKPLGFNVVSDAGKADLVILNTCHIREKAAEKLYSELGKIHSLRKEMTIVVAGCVAQAEGEEVFRRAPFVDIVVGPQSIATLPELIVKASRSKGHVINTDFPEVAKFDKLPDECYGNSQGSSAFLAIQEGCDKFCTFCVVPYTRGAEYSRPVNEIFREALKLVANGANEINLLGQNVNAYHGECEGEVWDLGKLISHIAKIEKLERIRYTTSHPRDMHESLYLAHAEEPKLMPFVHLPVQSGSNKILHAMNRKHTAEEYLEIIDRFRKLKPEIEFSSDFIVGFPGETEKDFEETMKLVEKVRYAQAYSFKYSPRPGTPGAERKDQVPEEVKTERLLRLQKLISKQQLEFNQSMVGKTIPVLFSDKKGKHQNQIIGKSPYMQSVCIDDSEDKYRDKIVNVKVLEARQSSLLGCAFH</sequence>
<keyword id="KW-0004">4Fe-4S</keyword>
<keyword id="KW-0963">Cytoplasm</keyword>
<keyword id="KW-0408">Iron</keyword>
<keyword id="KW-0411">Iron-sulfur</keyword>
<keyword id="KW-0479">Metal-binding</keyword>
<keyword id="KW-0949">S-adenosyl-L-methionine</keyword>
<keyword id="KW-0808">Transferase</keyword>
<keyword id="KW-0819">tRNA processing</keyword>
<accession>Q73HW8</accession>
<organism>
    <name type="scientific">Wolbachia pipientis wMel</name>
    <dbReference type="NCBI Taxonomy" id="163164"/>
    <lineage>
        <taxon>Bacteria</taxon>
        <taxon>Pseudomonadati</taxon>
        <taxon>Pseudomonadota</taxon>
        <taxon>Alphaproteobacteria</taxon>
        <taxon>Rickettsiales</taxon>
        <taxon>Anaplasmataceae</taxon>
        <taxon>Wolbachieae</taxon>
        <taxon>Wolbachia</taxon>
    </lineage>
</organism>
<evidence type="ECO:0000255" key="1">
    <source>
        <dbReference type="HAMAP-Rule" id="MF_01864"/>
    </source>
</evidence>
<evidence type="ECO:0000255" key="2">
    <source>
        <dbReference type="PROSITE-ProRule" id="PRU01266"/>
    </source>
</evidence>
<name>MIAB_WOLPM</name>
<protein>
    <recommendedName>
        <fullName evidence="1">tRNA-2-methylthio-N(6)-dimethylallyladenosine synthase</fullName>
        <ecNumber evidence="1">2.8.4.3</ecNumber>
    </recommendedName>
    <alternativeName>
        <fullName evidence="1">(Dimethylallyl)adenosine tRNA methylthiotransferase MiaB</fullName>
    </alternativeName>
    <alternativeName>
        <fullName evidence="1">tRNA-i(6)A37 methylthiotransferase</fullName>
    </alternativeName>
</protein>
<proteinExistence type="inferred from homology"/>
<feature type="chain" id="PRO_0000374638" description="tRNA-2-methylthio-N(6)-dimethylallyladenosine synthase">
    <location>
        <begin position="1"/>
        <end position="439"/>
    </location>
</feature>
<feature type="domain" description="MTTase N-terminal" evidence="1">
    <location>
        <begin position="2"/>
        <end position="115"/>
    </location>
</feature>
<feature type="domain" description="Radical SAM core" evidence="2">
    <location>
        <begin position="141"/>
        <end position="372"/>
    </location>
</feature>
<feature type="domain" description="TRAM" evidence="1">
    <location>
        <begin position="375"/>
        <end position="439"/>
    </location>
</feature>
<feature type="binding site" evidence="1">
    <location>
        <position position="11"/>
    </location>
    <ligand>
        <name>[4Fe-4S] cluster</name>
        <dbReference type="ChEBI" id="CHEBI:49883"/>
        <label>1</label>
    </ligand>
</feature>
<feature type="binding site" evidence="1">
    <location>
        <position position="47"/>
    </location>
    <ligand>
        <name>[4Fe-4S] cluster</name>
        <dbReference type="ChEBI" id="CHEBI:49883"/>
        <label>1</label>
    </ligand>
</feature>
<feature type="binding site" evidence="1">
    <location>
        <position position="78"/>
    </location>
    <ligand>
        <name>[4Fe-4S] cluster</name>
        <dbReference type="ChEBI" id="CHEBI:49883"/>
        <label>1</label>
    </ligand>
</feature>
<feature type="binding site" evidence="1">
    <location>
        <position position="155"/>
    </location>
    <ligand>
        <name>[4Fe-4S] cluster</name>
        <dbReference type="ChEBI" id="CHEBI:49883"/>
        <label>2</label>
        <note>4Fe-4S-S-AdoMet</note>
    </ligand>
</feature>
<feature type="binding site" evidence="1">
    <location>
        <position position="159"/>
    </location>
    <ligand>
        <name>[4Fe-4S] cluster</name>
        <dbReference type="ChEBI" id="CHEBI:49883"/>
        <label>2</label>
        <note>4Fe-4S-S-AdoMet</note>
    </ligand>
</feature>
<feature type="binding site" evidence="1">
    <location>
        <position position="162"/>
    </location>
    <ligand>
        <name>[4Fe-4S] cluster</name>
        <dbReference type="ChEBI" id="CHEBI:49883"/>
        <label>2</label>
        <note>4Fe-4S-S-AdoMet</note>
    </ligand>
</feature>
<comment type="function">
    <text evidence="1">Catalyzes the methylthiolation of N6-(dimethylallyl)adenosine (i(6)A), leading to the formation of 2-methylthio-N6-(dimethylallyl)adenosine (ms(2)i(6)A) at position 37 in tRNAs that read codons beginning with uridine.</text>
</comment>
<comment type="catalytic activity">
    <reaction evidence="1">
        <text>N(6)-dimethylallyladenosine(37) in tRNA + (sulfur carrier)-SH + AH2 + 2 S-adenosyl-L-methionine = 2-methylsulfanyl-N(6)-dimethylallyladenosine(37) in tRNA + (sulfur carrier)-H + 5'-deoxyadenosine + L-methionine + A + S-adenosyl-L-homocysteine + 2 H(+)</text>
        <dbReference type="Rhea" id="RHEA:37067"/>
        <dbReference type="Rhea" id="RHEA-COMP:10375"/>
        <dbReference type="Rhea" id="RHEA-COMP:10376"/>
        <dbReference type="Rhea" id="RHEA-COMP:14737"/>
        <dbReference type="Rhea" id="RHEA-COMP:14739"/>
        <dbReference type="ChEBI" id="CHEBI:13193"/>
        <dbReference type="ChEBI" id="CHEBI:15378"/>
        <dbReference type="ChEBI" id="CHEBI:17319"/>
        <dbReference type="ChEBI" id="CHEBI:17499"/>
        <dbReference type="ChEBI" id="CHEBI:29917"/>
        <dbReference type="ChEBI" id="CHEBI:57844"/>
        <dbReference type="ChEBI" id="CHEBI:57856"/>
        <dbReference type="ChEBI" id="CHEBI:59789"/>
        <dbReference type="ChEBI" id="CHEBI:64428"/>
        <dbReference type="ChEBI" id="CHEBI:74415"/>
        <dbReference type="ChEBI" id="CHEBI:74417"/>
        <dbReference type="EC" id="2.8.4.3"/>
    </reaction>
</comment>
<comment type="cofactor">
    <cofactor evidence="1">
        <name>[4Fe-4S] cluster</name>
        <dbReference type="ChEBI" id="CHEBI:49883"/>
    </cofactor>
    <text evidence="1">Binds 2 [4Fe-4S] clusters. One cluster is coordinated with 3 cysteines and an exchangeable S-adenosyl-L-methionine.</text>
</comment>
<comment type="subunit">
    <text evidence="1">Monomer.</text>
</comment>
<comment type="subcellular location">
    <subcellularLocation>
        <location evidence="1">Cytoplasm</location>
    </subcellularLocation>
</comment>
<comment type="similarity">
    <text evidence="1">Belongs to the methylthiotransferase family. MiaB subfamily.</text>
</comment>
<dbReference type="EC" id="2.8.4.3" evidence="1"/>
<dbReference type="EMBL" id="AE017196">
    <property type="protein sequence ID" value="AAS14145.1"/>
    <property type="molecule type" value="Genomic_DNA"/>
</dbReference>
<dbReference type="RefSeq" id="WP_010962578.1">
    <property type="nucleotide sequence ID" value="NZ_OX384529.1"/>
</dbReference>
<dbReference type="SMR" id="Q73HW8"/>
<dbReference type="EnsemblBacteria" id="AAS14145">
    <property type="protein sequence ID" value="AAS14145"/>
    <property type="gene ID" value="WD_0421"/>
</dbReference>
<dbReference type="GeneID" id="70035911"/>
<dbReference type="KEGG" id="wol:WD_0421"/>
<dbReference type="eggNOG" id="COG0621">
    <property type="taxonomic scope" value="Bacteria"/>
</dbReference>
<dbReference type="Proteomes" id="UP000008215">
    <property type="component" value="Chromosome"/>
</dbReference>
<dbReference type="GO" id="GO:0005829">
    <property type="term" value="C:cytosol"/>
    <property type="evidence" value="ECO:0007669"/>
    <property type="project" value="TreeGrafter"/>
</dbReference>
<dbReference type="GO" id="GO:0051539">
    <property type="term" value="F:4 iron, 4 sulfur cluster binding"/>
    <property type="evidence" value="ECO:0007669"/>
    <property type="project" value="UniProtKB-UniRule"/>
</dbReference>
<dbReference type="GO" id="GO:0046872">
    <property type="term" value="F:metal ion binding"/>
    <property type="evidence" value="ECO:0007669"/>
    <property type="project" value="UniProtKB-KW"/>
</dbReference>
<dbReference type="GO" id="GO:0035597">
    <property type="term" value="F:N6-isopentenyladenosine methylthiotransferase activity"/>
    <property type="evidence" value="ECO:0007669"/>
    <property type="project" value="TreeGrafter"/>
</dbReference>
<dbReference type="CDD" id="cd01335">
    <property type="entry name" value="Radical_SAM"/>
    <property type="match status" value="1"/>
</dbReference>
<dbReference type="FunFam" id="3.40.50.12160:FF:000003">
    <property type="entry name" value="CDK5 regulatory subunit-associated protein 1"/>
    <property type="match status" value="1"/>
</dbReference>
<dbReference type="FunFam" id="3.80.30.20:FF:000001">
    <property type="entry name" value="tRNA-2-methylthio-N(6)-dimethylallyladenosine synthase 2"/>
    <property type="match status" value="1"/>
</dbReference>
<dbReference type="Gene3D" id="3.40.50.12160">
    <property type="entry name" value="Methylthiotransferase, N-terminal domain"/>
    <property type="match status" value="1"/>
</dbReference>
<dbReference type="Gene3D" id="3.80.30.20">
    <property type="entry name" value="tm_1862 like domain"/>
    <property type="match status" value="1"/>
</dbReference>
<dbReference type="HAMAP" id="MF_01864">
    <property type="entry name" value="tRNA_metthiotr_MiaB"/>
    <property type="match status" value="1"/>
</dbReference>
<dbReference type="InterPro" id="IPR006638">
    <property type="entry name" value="Elp3/MiaA/NifB-like_rSAM"/>
</dbReference>
<dbReference type="InterPro" id="IPR005839">
    <property type="entry name" value="Methylthiotransferase"/>
</dbReference>
<dbReference type="InterPro" id="IPR020612">
    <property type="entry name" value="Methylthiotransferase_CS"/>
</dbReference>
<dbReference type="InterPro" id="IPR013848">
    <property type="entry name" value="Methylthiotransferase_N"/>
</dbReference>
<dbReference type="InterPro" id="IPR038135">
    <property type="entry name" value="Methylthiotransferase_N_sf"/>
</dbReference>
<dbReference type="InterPro" id="IPR006463">
    <property type="entry name" value="MiaB_methiolase"/>
</dbReference>
<dbReference type="InterPro" id="IPR007197">
    <property type="entry name" value="rSAM"/>
</dbReference>
<dbReference type="InterPro" id="IPR023404">
    <property type="entry name" value="rSAM_horseshoe"/>
</dbReference>
<dbReference type="InterPro" id="IPR002792">
    <property type="entry name" value="TRAM_dom"/>
</dbReference>
<dbReference type="NCBIfam" id="TIGR01574">
    <property type="entry name" value="miaB-methiolase"/>
    <property type="match status" value="1"/>
</dbReference>
<dbReference type="NCBIfam" id="TIGR00089">
    <property type="entry name" value="MiaB/RimO family radical SAM methylthiotransferase"/>
    <property type="match status" value="1"/>
</dbReference>
<dbReference type="PANTHER" id="PTHR43020">
    <property type="entry name" value="CDK5 REGULATORY SUBUNIT-ASSOCIATED PROTEIN 1"/>
    <property type="match status" value="1"/>
</dbReference>
<dbReference type="PANTHER" id="PTHR43020:SF2">
    <property type="entry name" value="MITOCHONDRIAL TRNA METHYLTHIOTRANSFERASE CDK5RAP1"/>
    <property type="match status" value="1"/>
</dbReference>
<dbReference type="Pfam" id="PF04055">
    <property type="entry name" value="Radical_SAM"/>
    <property type="match status" value="1"/>
</dbReference>
<dbReference type="Pfam" id="PF01938">
    <property type="entry name" value="TRAM"/>
    <property type="match status" value="1"/>
</dbReference>
<dbReference type="Pfam" id="PF00919">
    <property type="entry name" value="UPF0004"/>
    <property type="match status" value="1"/>
</dbReference>
<dbReference type="SFLD" id="SFLDF00273">
    <property type="entry name" value="(dimethylallyl)adenosine_tRNA"/>
    <property type="match status" value="1"/>
</dbReference>
<dbReference type="SFLD" id="SFLDG01082">
    <property type="entry name" value="B12-binding_domain_containing"/>
    <property type="match status" value="1"/>
</dbReference>
<dbReference type="SFLD" id="SFLDS00029">
    <property type="entry name" value="Radical_SAM"/>
    <property type="match status" value="1"/>
</dbReference>
<dbReference type="SMART" id="SM00729">
    <property type="entry name" value="Elp3"/>
    <property type="match status" value="1"/>
</dbReference>
<dbReference type="SUPFAM" id="SSF102114">
    <property type="entry name" value="Radical SAM enzymes"/>
    <property type="match status" value="1"/>
</dbReference>
<dbReference type="PROSITE" id="PS51449">
    <property type="entry name" value="MTTASE_N"/>
    <property type="match status" value="1"/>
</dbReference>
<dbReference type="PROSITE" id="PS01278">
    <property type="entry name" value="MTTASE_RADICAL"/>
    <property type="match status" value="1"/>
</dbReference>
<dbReference type="PROSITE" id="PS51918">
    <property type="entry name" value="RADICAL_SAM"/>
    <property type="match status" value="1"/>
</dbReference>
<dbReference type="PROSITE" id="PS50926">
    <property type="entry name" value="TRAM"/>
    <property type="match status" value="1"/>
</dbReference>
<reference key="1">
    <citation type="journal article" date="2004" name="PLoS Biol.">
        <title>Phylogenomics of the reproductive parasite Wolbachia pipientis wMel: a streamlined genome overrun by mobile genetic elements.</title>
        <authorList>
            <person name="Wu M."/>
            <person name="Sun L.V."/>
            <person name="Vamathevan J.J."/>
            <person name="Riegler M."/>
            <person name="DeBoy R.T."/>
            <person name="Brownlie J.C."/>
            <person name="McGraw E.A."/>
            <person name="Martin W."/>
            <person name="Esser C."/>
            <person name="Ahmadinejad N."/>
            <person name="Wiegand C."/>
            <person name="Madupu R."/>
            <person name="Beanan M.J."/>
            <person name="Brinkac L.M."/>
            <person name="Daugherty S.C."/>
            <person name="Durkin A.S."/>
            <person name="Kolonay J.F."/>
            <person name="Nelson W.C."/>
            <person name="Mohamoud Y."/>
            <person name="Lee P."/>
            <person name="Berry K.J."/>
            <person name="Young M.B."/>
            <person name="Utterback T.R."/>
            <person name="Weidman J.F."/>
            <person name="Nierman W.C."/>
            <person name="Paulsen I.T."/>
            <person name="Nelson K.E."/>
            <person name="Tettelin H."/>
            <person name="O'Neill S.L."/>
            <person name="Eisen J.A."/>
        </authorList>
    </citation>
    <scope>NUCLEOTIDE SEQUENCE [LARGE SCALE GENOMIC DNA]</scope>
</reference>